<keyword id="KW-0028">Amino-acid biosynthesis</keyword>
<keyword id="KW-0057">Aromatic amino acid biosynthesis</keyword>
<keyword id="KW-0274">FAD</keyword>
<keyword id="KW-0285">Flavoprotein</keyword>
<keyword id="KW-0288">FMN</keyword>
<keyword id="KW-0456">Lyase</keyword>
<keyword id="KW-0521">NADP</keyword>
<keyword id="KW-1185">Reference proteome</keyword>
<dbReference type="EC" id="4.2.3.5" evidence="1"/>
<dbReference type="EMBL" id="AE016877">
    <property type="protein sequence ID" value="AAP09889.1"/>
    <property type="molecule type" value="Genomic_DNA"/>
</dbReference>
<dbReference type="RefSeq" id="NP_832688.1">
    <property type="nucleotide sequence ID" value="NC_004722.1"/>
</dbReference>
<dbReference type="SMR" id="Q81C42"/>
<dbReference type="STRING" id="226900.BC_2941"/>
<dbReference type="KEGG" id="bce:BC2941"/>
<dbReference type="PATRIC" id="fig|226900.8.peg.3016"/>
<dbReference type="HOGENOM" id="CLU_034547_2_0_9"/>
<dbReference type="OrthoDB" id="9771806at2"/>
<dbReference type="UniPathway" id="UPA00053">
    <property type="reaction ID" value="UER00090"/>
</dbReference>
<dbReference type="Proteomes" id="UP000001417">
    <property type="component" value="Chromosome"/>
</dbReference>
<dbReference type="GO" id="GO:0005829">
    <property type="term" value="C:cytosol"/>
    <property type="evidence" value="ECO:0000318"/>
    <property type="project" value="GO_Central"/>
</dbReference>
<dbReference type="GO" id="GO:0004107">
    <property type="term" value="F:chorismate synthase activity"/>
    <property type="evidence" value="ECO:0000318"/>
    <property type="project" value="GO_Central"/>
</dbReference>
<dbReference type="GO" id="GO:0010181">
    <property type="term" value="F:FMN binding"/>
    <property type="evidence" value="ECO:0000318"/>
    <property type="project" value="GO_Central"/>
</dbReference>
<dbReference type="GO" id="GO:0008652">
    <property type="term" value="P:amino acid biosynthetic process"/>
    <property type="evidence" value="ECO:0007669"/>
    <property type="project" value="UniProtKB-KW"/>
</dbReference>
<dbReference type="GO" id="GO:0009073">
    <property type="term" value="P:aromatic amino acid family biosynthetic process"/>
    <property type="evidence" value="ECO:0000318"/>
    <property type="project" value="GO_Central"/>
</dbReference>
<dbReference type="GO" id="GO:0009423">
    <property type="term" value="P:chorismate biosynthetic process"/>
    <property type="evidence" value="ECO:0000318"/>
    <property type="project" value="GO_Central"/>
</dbReference>
<dbReference type="CDD" id="cd07304">
    <property type="entry name" value="Chorismate_synthase"/>
    <property type="match status" value="1"/>
</dbReference>
<dbReference type="FunFam" id="3.60.150.10:FF:000002">
    <property type="entry name" value="Chorismate synthase"/>
    <property type="match status" value="1"/>
</dbReference>
<dbReference type="Gene3D" id="3.60.150.10">
    <property type="entry name" value="Chorismate synthase AroC"/>
    <property type="match status" value="1"/>
</dbReference>
<dbReference type="HAMAP" id="MF_00300">
    <property type="entry name" value="Chorismate_synth"/>
    <property type="match status" value="1"/>
</dbReference>
<dbReference type="InterPro" id="IPR000453">
    <property type="entry name" value="Chorismate_synth"/>
</dbReference>
<dbReference type="InterPro" id="IPR035904">
    <property type="entry name" value="Chorismate_synth_AroC_sf"/>
</dbReference>
<dbReference type="InterPro" id="IPR020541">
    <property type="entry name" value="Chorismate_synthase_CS"/>
</dbReference>
<dbReference type="NCBIfam" id="TIGR00033">
    <property type="entry name" value="aroC"/>
    <property type="match status" value="1"/>
</dbReference>
<dbReference type="NCBIfam" id="NF003793">
    <property type="entry name" value="PRK05382.1"/>
    <property type="match status" value="1"/>
</dbReference>
<dbReference type="NCBIfam" id="NF009113">
    <property type="entry name" value="PRK12463.1"/>
    <property type="match status" value="1"/>
</dbReference>
<dbReference type="PANTHER" id="PTHR21085">
    <property type="entry name" value="CHORISMATE SYNTHASE"/>
    <property type="match status" value="1"/>
</dbReference>
<dbReference type="PANTHER" id="PTHR21085:SF0">
    <property type="entry name" value="CHORISMATE SYNTHASE"/>
    <property type="match status" value="1"/>
</dbReference>
<dbReference type="Pfam" id="PF01264">
    <property type="entry name" value="Chorismate_synt"/>
    <property type="match status" value="1"/>
</dbReference>
<dbReference type="PIRSF" id="PIRSF001456">
    <property type="entry name" value="Chorismate_synth"/>
    <property type="match status" value="1"/>
</dbReference>
<dbReference type="SUPFAM" id="SSF103263">
    <property type="entry name" value="Chorismate synthase, AroC"/>
    <property type="match status" value="1"/>
</dbReference>
<dbReference type="PROSITE" id="PS00787">
    <property type="entry name" value="CHORISMATE_SYNTHASE_1"/>
    <property type="match status" value="1"/>
</dbReference>
<dbReference type="PROSITE" id="PS00788">
    <property type="entry name" value="CHORISMATE_SYNTHASE_2"/>
    <property type="match status" value="1"/>
</dbReference>
<dbReference type="PROSITE" id="PS00789">
    <property type="entry name" value="CHORISMATE_SYNTHASE_3"/>
    <property type="match status" value="1"/>
</dbReference>
<organism>
    <name type="scientific">Bacillus cereus (strain ATCC 14579 / DSM 31 / CCUG 7414 / JCM 2152 / NBRC 15305 / NCIMB 9373 / NCTC 2599 / NRRL B-3711)</name>
    <dbReference type="NCBI Taxonomy" id="226900"/>
    <lineage>
        <taxon>Bacteria</taxon>
        <taxon>Bacillati</taxon>
        <taxon>Bacillota</taxon>
        <taxon>Bacilli</taxon>
        <taxon>Bacillales</taxon>
        <taxon>Bacillaceae</taxon>
        <taxon>Bacillus</taxon>
        <taxon>Bacillus cereus group</taxon>
    </lineage>
</organism>
<name>AROC2_BACCR</name>
<feature type="chain" id="PRO_0000140544" description="Chorismate synthase 2">
    <location>
        <begin position="1"/>
        <end position="390"/>
    </location>
</feature>
<feature type="binding site" evidence="1">
    <location>
        <position position="39"/>
    </location>
    <ligand>
        <name>NADP(+)</name>
        <dbReference type="ChEBI" id="CHEBI:58349"/>
    </ligand>
</feature>
<feature type="binding site" evidence="1">
    <location>
        <position position="45"/>
    </location>
    <ligand>
        <name>NADP(+)</name>
        <dbReference type="ChEBI" id="CHEBI:58349"/>
    </ligand>
</feature>
<feature type="binding site" evidence="1">
    <location>
        <begin position="132"/>
        <end position="134"/>
    </location>
    <ligand>
        <name>FMN</name>
        <dbReference type="ChEBI" id="CHEBI:58210"/>
    </ligand>
</feature>
<feature type="binding site" evidence="1">
    <location>
        <begin position="253"/>
        <end position="254"/>
    </location>
    <ligand>
        <name>FMN</name>
        <dbReference type="ChEBI" id="CHEBI:58210"/>
    </ligand>
</feature>
<feature type="binding site" evidence="1">
    <location>
        <position position="298"/>
    </location>
    <ligand>
        <name>FMN</name>
        <dbReference type="ChEBI" id="CHEBI:58210"/>
    </ligand>
</feature>
<feature type="binding site" evidence="1">
    <location>
        <begin position="313"/>
        <end position="317"/>
    </location>
    <ligand>
        <name>FMN</name>
        <dbReference type="ChEBI" id="CHEBI:58210"/>
    </ligand>
</feature>
<feature type="binding site" evidence="1">
    <location>
        <position position="339"/>
    </location>
    <ligand>
        <name>FMN</name>
        <dbReference type="ChEBI" id="CHEBI:58210"/>
    </ligand>
</feature>
<proteinExistence type="inferred from homology"/>
<comment type="function">
    <text evidence="1">Catalyzes the anti-1,4-elimination of the C-3 phosphate and the C-6 proR hydrogen from 5-enolpyruvylshikimate-3-phosphate (EPSP) to yield chorismate, which is the branch point compound that serves as the starting substrate for the three terminal pathways of aromatic amino acid biosynthesis. This reaction introduces a second double bond into the aromatic ring system.</text>
</comment>
<comment type="catalytic activity">
    <reaction evidence="1">
        <text>5-O-(1-carboxyvinyl)-3-phosphoshikimate = chorismate + phosphate</text>
        <dbReference type="Rhea" id="RHEA:21020"/>
        <dbReference type="ChEBI" id="CHEBI:29748"/>
        <dbReference type="ChEBI" id="CHEBI:43474"/>
        <dbReference type="ChEBI" id="CHEBI:57701"/>
        <dbReference type="EC" id="4.2.3.5"/>
    </reaction>
</comment>
<comment type="cofactor">
    <cofactor evidence="1">
        <name>FMNH2</name>
        <dbReference type="ChEBI" id="CHEBI:57618"/>
    </cofactor>
    <text evidence="1">Reduced FMN (FMNH(2)).</text>
</comment>
<comment type="pathway">
    <text evidence="1">Metabolic intermediate biosynthesis; chorismate biosynthesis; chorismate from D-erythrose 4-phosphate and phosphoenolpyruvate: step 7/7.</text>
</comment>
<comment type="subunit">
    <text evidence="1">Homotetramer.</text>
</comment>
<comment type="similarity">
    <text evidence="1">Belongs to the chorismate synthase family.</text>
</comment>
<gene>
    <name evidence="1" type="primary">aroC2</name>
    <name type="ordered locus">BC_2941</name>
</gene>
<accession>Q81C42</accession>
<reference key="1">
    <citation type="journal article" date="2003" name="Nature">
        <title>Genome sequence of Bacillus cereus and comparative analysis with Bacillus anthracis.</title>
        <authorList>
            <person name="Ivanova N."/>
            <person name="Sorokin A."/>
            <person name="Anderson I."/>
            <person name="Galleron N."/>
            <person name="Candelon B."/>
            <person name="Kapatral V."/>
            <person name="Bhattacharyya A."/>
            <person name="Reznik G."/>
            <person name="Mikhailova N."/>
            <person name="Lapidus A."/>
            <person name="Chu L."/>
            <person name="Mazur M."/>
            <person name="Goltsman E."/>
            <person name="Larsen N."/>
            <person name="D'Souza M."/>
            <person name="Walunas T."/>
            <person name="Grechkin Y."/>
            <person name="Pusch G."/>
            <person name="Haselkorn R."/>
            <person name="Fonstein M."/>
            <person name="Ehrlich S.D."/>
            <person name="Overbeek R."/>
            <person name="Kyrpides N.C."/>
        </authorList>
    </citation>
    <scope>NUCLEOTIDE SEQUENCE [LARGE SCALE GENOMIC DNA]</scope>
    <source>
        <strain>ATCC 14579 / DSM 31 / CCUG 7414 / JCM 2152 / NBRC 15305 / NCIMB 9373 / NCTC 2599 / NRRL B-3711</strain>
    </source>
</reference>
<evidence type="ECO:0000255" key="1">
    <source>
        <dbReference type="HAMAP-Rule" id="MF_00300"/>
    </source>
</evidence>
<protein>
    <recommendedName>
        <fullName evidence="1">Chorismate synthase 2</fullName>
        <shortName evidence="1">CS 2</shortName>
        <ecNumber evidence="1">4.2.3.5</ecNumber>
    </recommendedName>
    <alternativeName>
        <fullName evidence="1">5-enolpyruvylshikimate-3-phosphate phospholyase 2</fullName>
    </alternativeName>
</protein>
<sequence>MRYITAGESHGPQLTVILEGVPAGLTLTAEHINKELLRRQKGHGRGRRMQIETDTVEIVSGVRHGMTLGSPITLIVKNDDFKHWTKVMGAEPISEKESKDMKRTITKPRPGHADLNGAIKYGHRDIRNVLERSSARETTVRVAAGAVAKQILSELGVEIAGHVLEIGGVKAKHISNLSIEEIQTITENSPVRCLDKEVEQEMMNAIDNAKSSGDSIGGIVEVIAEGMPIGVGSYVHYDRKLDAKLAGAIMSINAFKGAEIGVGFEAARQPGSKVHDEILWDEEKGYTRRTNNAGGLEGGMTTGMPIIVRGVMKPIPTLYKPLASVDIDTKEAFQASIERSDSCAVPAAGVVAESVVAWELADALVEQFGKDRMELLKQNIMQHNNYAKEF</sequence>